<reference key="1">
    <citation type="submission" date="2007-08" db="EMBL/GenBank/DDBJ databases">
        <title>Complete sequence of Shewanella sediminis HAW-EB3.</title>
        <authorList>
            <consortium name="US DOE Joint Genome Institute"/>
            <person name="Copeland A."/>
            <person name="Lucas S."/>
            <person name="Lapidus A."/>
            <person name="Barry K."/>
            <person name="Glavina del Rio T."/>
            <person name="Dalin E."/>
            <person name="Tice H."/>
            <person name="Pitluck S."/>
            <person name="Chertkov O."/>
            <person name="Brettin T."/>
            <person name="Bruce D."/>
            <person name="Detter J.C."/>
            <person name="Han C."/>
            <person name="Schmutz J."/>
            <person name="Larimer F."/>
            <person name="Land M."/>
            <person name="Hauser L."/>
            <person name="Kyrpides N."/>
            <person name="Kim E."/>
            <person name="Zhao J.-S."/>
            <person name="Richardson P."/>
        </authorList>
    </citation>
    <scope>NUCLEOTIDE SEQUENCE [LARGE SCALE GENOMIC DNA]</scope>
    <source>
        <strain>HAW-EB3</strain>
    </source>
</reference>
<keyword id="KW-0285">Flavoprotein</keyword>
<keyword id="KW-0288">FMN</keyword>
<keyword id="KW-0560">Oxidoreductase</keyword>
<keyword id="KW-0664">Pyridoxine biosynthesis</keyword>
<keyword id="KW-1185">Reference proteome</keyword>
<sequence>MSKLSDIRREYTLGGLHKEDLPGDPIELFSKWMEQARDSEVLSDPTAMSVATVDADGQPFQRIVLLKRFDKGGFVFFTNLESRKSQQIAINSKVSLLFPWHSLERQVAITGEAEPLSTAEVMKYFITRPKESQIAAWVSKQSSKISARQALESKFAEMKAKFSQGEVPLPKFWGGYIVKPTSIEFWQGGEHRLHDRFLYSKENSGWDISRLAP</sequence>
<protein>
    <recommendedName>
        <fullName evidence="1">Pyridoxine/pyridoxamine 5'-phosphate oxidase</fullName>
        <ecNumber evidence="1">1.4.3.5</ecNumber>
    </recommendedName>
    <alternativeName>
        <fullName evidence="1">PNP/PMP oxidase</fullName>
        <shortName evidence="1">PNPOx</shortName>
    </alternativeName>
    <alternativeName>
        <fullName evidence="1">Pyridoxal 5'-phosphate synthase</fullName>
    </alternativeName>
</protein>
<evidence type="ECO:0000255" key="1">
    <source>
        <dbReference type="HAMAP-Rule" id="MF_01629"/>
    </source>
</evidence>
<feature type="chain" id="PRO_0000335803" description="Pyridoxine/pyridoxamine 5'-phosphate oxidase">
    <location>
        <begin position="1"/>
        <end position="213"/>
    </location>
</feature>
<feature type="binding site" evidence="1">
    <location>
        <begin position="8"/>
        <end position="11"/>
    </location>
    <ligand>
        <name>substrate</name>
    </ligand>
</feature>
<feature type="binding site" evidence="1">
    <location>
        <begin position="62"/>
        <end position="67"/>
    </location>
    <ligand>
        <name>FMN</name>
        <dbReference type="ChEBI" id="CHEBI:58210"/>
    </ligand>
</feature>
<feature type="binding site" evidence="1">
    <location>
        <position position="67"/>
    </location>
    <ligand>
        <name>substrate</name>
    </ligand>
</feature>
<feature type="binding site" evidence="1">
    <location>
        <begin position="77"/>
        <end position="78"/>
    </location>
    <ligand>
        <name>FMN</name>
        <dbReference type="ChEBI" id="CHEBI:58210"/>
    </ligand>
</feature>
<feature type="binding site" evidence="1">
    <location>
        <position position="83"/>
    </location>
    <ligand>
        <name>FMN</name>
        <dbReference type="ChEBI" id="CHEBI:58210"/>
    </ligand>
</feature>
<feature type="binding site" evidence="1">
    <location>
        <position position="84"/>
    </location>
    <ligand>
        <name>FMN</name>
        <dbReference type="ChEBI" id="CHEBI:58210"/>
    </ligand>
</feature>
<feature type="binding site" evidence="1">
    <location>
        <position position="106"/>
    </location>
    <ligand>
        <name>FMN</name>
        <dbReference type="ChEBI" id="CHEBI:58210"/>
    </ligand>
</feature>
<feature type="binding site" evidence="1">
    <location>
        <position position="124"/>
    </location>
    <ligand>
        <name>substrate</name>
    </ligand>
</feature>
<feature type="binding site" evidence="1">
    <location>
        <position position="128"/>
    </location>
    <ligand>
        <name>substrate</name>
    </ligand>
</feature>
<feature type="binding site" evidence="1">
    <location>
        <position position="132"/>
    </location>
    <ligand>
        <name>substrate</name>
    </ligand>
</feature>
<feature type="binding site" evidence="1">
    <location>
        <begin position="141"/>
        <end position="142"/>
    </location>
    <ligand>
        <name>FMN</name>
        <dbReference type="ChEBI" id="CHEBI:58210"/>
    </ligand>
</feature>
<feature type="binding site" evidence="1">
    <location>
        <position position="186"/>
    </location>
    <ligand>
        <name>FMN</name>
        <dbReference type="ChEBI" id="CHEBI:58210"/>
    </ligand>
</feature>
<feature type="binding site" evidence="1">
    <location>
        <begin position="192"/>
        <end position="194"/>
    </location>
    <ligand>
        <name>substrate</name>
    </ligand>
</feature>
<feature type="binding site" evidence="1">
    <location>
        <position position="196"/>
    </location>
    <ligand>
        <name>FMN</name>
        <dbReference type="ChEBI" id="CHEBI:58210"/>
    </ligand>
</feature>
<proteinExistence type="inferred from homology"/>
<gene>
    <name evidence="1" type="primary">pdxH</name>
    <name type="ordered locus">Ssed_2606</name>
</gene>
<comment type="function">
    <text evidence="1">Catalyzes the oxidation of either pyridoxine 5'-phosphate (PNP) or pyridoxamine 5'-phosphate (PMP) into pyridoxal 5'-phosphate (PLP).</text>
</comment>
<comment type="catalytic activity">
    <reaction evidence="1">
        <text>pyridoxamine 5'-phosphate + O2 + H2O = pyridoxal 5'-phosphate + H2O2 + NH4(+)</text>
        <dbReference type="Rhea" id="RHEA:15817"/>
        <dbReference type="ChEBI" id="CHEBI:15377"/>
        <dbReference type="ChEBI" id="CHEBI:15379"/>
        <dbReference type="ChEBI" id="CHEBI:16240"/>
        <dbReference type="ChEBI" id="CHEBI:28938"/>
        <dbReference type="ChEBI" id="CHEBI:58451"/>
        <dbReference type="ChEBI" id="CHEBI:597326"/>
        <dbReference type="EC" id="1.4.3.5"/>
    </reaction>
</comment>
<comment type="catalytic activity">
    <reaction evidence="1">
        <text>pyridoxine 5'-phosphate + O2 = pyridoxal 5'-phosphate + H2O2</text>
        <dbReference type="Rhea" id="RHEA:15149"/>
        <dbReference type="ChEBI" id="CHEBI:15379"/>
        <dbReference type="ChEBI" id="CHEBI:16240"/>
        <dbReference type="ChEBI" id="CHEBI:58589"/>
        <dbReference type="ChEBI" id="CHEBI:597326"/>
        <dbReference type="EC" id="1.4.3.5"/>
    </reaction>
</comment>
<comment type="cofactor">
    <cofactor evidence="1">
        <name>FMN</name>
        <dbReference type="ChEBI" id="CHEBI:58210"/>
    </cofactor>
    <text evidence="1">Binds 1 FMN per subunit.</text>
</comment>
<comment type="pathway">
    <text evidence="1">Cofactor metabolism; pyridoxal 5'-phosphate salvage; pyridoxal 5'-phosphate from pyridoxamine 5'-phosphate: step 1/1.</text>
</comment>
<comment type="pathway">
    <text evidence="1">Cofactor metabolism; pyridoxal 5'-phosphate salvage; pyridoxal 5'-phosphate from pyridoxine 5'-phosphate: step 1/1.</text>
</comment>
<comment type="subunit">
    <text evidence="1">Homodimer.</text>
</comment>
<comment type="similarity">
    <text evidence="1">Belongs to the pyridoxamine 5'-phosphate oxidase family.</text>
</comment>
<dbReference type="EC" id="1.4.3.5" evidence="1"/>
<dbReference type="EMBL" id="CP000821">
    <property type="protein sequence ID" value="ABV37213.1"/>
    <property type="molecule type" value="Genomic_DNA"/>
</dbReference>
<dbReference type="RefSeq" id="WP_012142945.1">
    <property type="nucleotide sequence ID" value="NC_009831.1"/>
</dbReference>
<dbReference type="SMR" id="A8FWJ0"/>
<dbReference type="STRING" id="425104.Ssed_2606"/>
<dbReference type="KEGG" id="sse:Ssed_2606"/>
<dbReference type="eggNOG" id="COG0259">
    <property type="taxonomic scope" value="Bacteria"/>
</dbReference>
<dbReference type="HOGENOM" id="CLU_032263_2_2_6"/>
<dbReference type="OrthoDB" id="9780392at2"/>
<dbReference type="UniPathway" id="UPA01068">
    <property type="reaction ID" value="UER00304"/>
</dbReference>
<dbReference type="UniPathway" id="UPA01068">
    <property type="reaction ID" value="UER00305"/>
</dbReference>
<dbReference type="Proteomes" id="UP000002015">
    <property type="component" value="Chromosome"/>
</dbReference>
<dbReference type="GO" id="GO:0010181">
    <property type="term" value="F:FMN binding"/>
    <property type="evidence" value="ECO:0007669"/>
    <property type="project" value="UniProtKB-UniRule"/>
</dbReference>
<dbReference type="GO" id="GO:0004733">
    <property type="term" value="F:pyridoxamine phosphate oxidase activity"/>
    <property type="evidence" value="ECO:0007669"/>
    <property type="project" value="UniProtKB-UniRule"/>
</dbReference>
<dbReference type="GO" id="GO:0008615">
    <property type="term" value="P:pyridoxine biosynthetic process"/>
    <property type="evidence" value="ECO:0007669"/>
    <property type="project" value="UniProtKB-KW"/>
</dbReference>
<dbReference type="Gene3D" id="2.30.110.10">
    <property type="entry name" value="Electron Transport, Fmn-binding Protein, Chain A"/>
    <property type="match status" value="1"/>
</dbReference>
<dbReference type="HAMAP" id="MF_01629">
    <property type="entry name" value="PdxH"/>
    <property type="match status" value="1"/>
</dbReference>
<dbReference type="InterPro" id="IPR000659">
    <property type="entry name" value="Pyridox_Oxase"/>
</dbReference>
<dbReference type="InterPro" id="IPR019740">
    <property type="entry name" value="Pyridox_Oxase_CS"/>
</dbReference>
<dbReference type="InterPro" id="IPR011576">
    <property type="entry name" value="Pyridox_Oxase_N"/>
</dbReference>
<dbReference type="InterPro" id="IPR019576">
    <property type="entry name" value="Pyridoxamine_oxidase_dimer_C"/>
</dbReference>
<dbReference type="InterPro" id="IPR012349">
    <property type="entry name" value="Split_barrel_FMN-bd"/>
</dbReference>
<dbReference type="NCBIfam" id="TIGR00558">
    <property type="entry name" value="pdxH"/>
    <property type="match status" value="1"/>
</dbReference>
<dbReference type="NCBIfam" id="NF004231">
    <property type="entry name" value="PRK05679.1"/>
    <property type="match status" value="1"/>
</dbReference>
<dbReference type="PANTHER" id="PTHR10851:SF0">
    <property type="entry name" value="PYRIDOXINE-5'-PHOSPHATE OXIDASE"/>
    <property type="match status" value="1"/>
</dbReference>
<dbReference type="PANTHER" id="PTHR10851">
    <property type="entry name" value="PYRIDOXINE-5-PHOSPHATE OXIDASE"/>
    <property type="match status" value="1"/>
</dbReference>
<dbReference type="Pfam" id="PF10590">
    <property type="entry name" value="PNP_phzG_C"/>
    <property type="match status" value="1"/>
</dbReference>
<dbReference type="Pfam" id="PF01243">
    <property type="entry name" value="PNPOx_N"/>
    <property type="match status" value="1"/>
</dbReference>
<dbReference type="PIRSF" id="PIRSF000190">
    <property type="entry name" value="Pyd_amn-ph_oxd"/>
    <property type="match status" value="1"/>
</dbReference>
<dbReference type="SUPFAM" id="SSF50475">
    <property type="entry name" value="FMN-binding split barrel"/>
    <property type="match status" value="1"/>
</dbReference>
<dbReference type="PROSITE" id="PS01064">
    <property type="entry name" value="PYRIDOX_OXIDASE"/>
    <property type="match status" value="1"/>
</dbReference>
<organism>
    <name type="scientific">Shewanella sediminis (strain HAW-EB3)</name>
    <dbReference type="NCBI Taxonomy" id="425104"/>
    <lineage>
        <taxon>Bacteria</taxon>
        <taxon>Pseudomonadati</taxon>
        <taxon>Pseudomonadota</taxon>
        <taxon>Gammaproteobacteria</taxon>
        <taxon>Alteromonadales</taxon>
        <taxon>Shewanellaceae</taxon>
        <taxon>Shewanella</taxon>
    </lineage>
</organism>
<name>PDXH_SHESH</name>
<accession>A8FWJ0</accession>